<keyword id="KW-1003">Cell membrane</keyword>
<keyword id="KW-0342">GTP-binding</keyword>
<keyword id="KW-0378">Hydrolase</keyword>
<keyword id="KW-0449">Lipoprotein</keyword>
<keyword id="KW-0472">Membrane</keyword>
<keyword id="KW-0488">Methylation</keyword>
<keyword id="KW-0547">Nucleotide-binding</keyword>
<keyword id="KW-0636">Prenylation</keyword>
<sequence length="198" mass="22782">MSTKGAAFLKEYKIVMVGDGGVGKSAMTIQFIQSTFVDEYDPTIEDSYRKQCLIDSECAMLDILDTAGQEEYSAMRERFMRNGEGFVLIYSITSYHTFEQVQKLHEQIARVKDLEHFPMVLVGNKCDLEQDRQVPTSAGRDLAKQYNCQFFEASAKQNVRIQDAFHGLVREIRRSQQEKCKKQKQYDEKQASLCCIVM</sequence>
<organism>
    <name type="scientific">Mucor circinelloides f. lusitanicus</name>
    <name type="common">Mucor racemosus var. lusitanicus</name>
    <dbReference type="NCBI Taxonomy" id="29924"/>
    <lineage>
        <taxon>Eukaryota</taxon>
        <taxon>Fungi</taxon>
        <taxon>Fungi incertae sedis</taxon>
        <taxon>Mucoromycota</taxon>
        <taxon>Mucoromycotina</taxon>
        <taxon>Mucoromycetes</taxon>
        <taxon>Mucorales</taxon>
        <taxon>Mucorineae</taxon>
        <taxon>Mucoraceae</taxon>
        <taxon>Mucor</taxon>
    </lineage>
</organism>
<proteinExistence type="evidence at transcript level"/>
<gene>
    <name type="primary">RAS2</name>
</gene>
<name>RAS2_MUCCL</name>
<accession>P22279</accession>
<comment type="catalytic activity">
    <reaction evidence="2">
        <text>GTP + H2O = GDP + phosphate + H(+)</text>
        <dbReference type="Rhea" id="RHEA:19669"/>
        <dbReference type="ChEBI" id="CHEBI:15377"/>
        <dbReference type="ChEBI" id="CHEBI:15378"/>
        <dbReference type="ChEBI" id="CHEBI:37565"/>
        <dbReference type="ChEBI" id="CHEBI:43474"/>
        <dbReference type="ChEBI" id="CHEBI:58189"/>
        <dbReference type="EC" id="3.6.5.2"/>
    </reaction>
</comment>
<comment type="activity regulation">
    <text>Alternates between an inactive form bound to GDP and an active form bound to GTP. Activated by a guanine nucleotide-exchange factor (GEF) and inactivated by a GTPase-activating protein (GAP).</text>
</comment>
<comment type="subcellular location">
    <subcellularLocation>
        <location>Cell membrane</location>
        <topology>Lipid-anchor</topology>
    </subcellularLocation>
</comment>
<comment type="developmental stage">
    <text>No transcripts for RAS2 were detected in any developmental stage.</text>
</comment>
<comment type="similarity">
    <text evidence="3">Belongs to the small GTPase superfamily. Ras family.</text>
</comment>
<feature type="chain" id="PRO_0000082680" description="Ras-like protein 2">
    <location>
        <begin position="1"/>
        <end position="195"/>
    </location>
</feature>
<feature type="propeptide" id="PRO_0000281323" description="Removed in mature form" evidence="1">
    <location>
        <begin position="196"/>
        <end position="198"/>
    </location>
</feature>
<feature type="short sequence motif" description="Effector region" evidence="3">
    <location>
        <begin position="40"/>
        <end position="48"/>
    </location>
</feature>
<feature type="binding site" evidence="1">
    <location>
        <begin position="18"/>
        <end position="25"/>
    </location>
    <ligand>
        <name>GTP</name>
        <dbReference type="ChEBI" id="CHEBI:37565"/>
    </ligand>
</feature>
<feature type="binding site" evidence="1">
    <location>
        <begin position="65"/>
        <end position="69"/>
    </location>
    <ligand>
        <name>GTP</name>
        <dbReference type="ChEBI" id="CHEBI:37565"/>
    </ligand>
</feature>
<feature type="binding site" evidence="1">
    <location>
        <begin position="124"/>
        <end position="127"/>
    </location>
    <ligand>
        <name>GTP</name>
        <dbReference type="ChEBI" id="CHEBI:37565"/>
    </ligand>
</feature>
<feature type="modified residue" description="Cysteine methyl ester" evidence="1">
    <location>
        <position position="195"/>
    </location>
</feature>
<feature type="lipid moiety-binding region" description="S-farnesyl cysteine" evidence="1">
    <location>
        <position position="195"/>
    </location>
</feature>
<protein>
    <recommendedName>
        <fullName>Ras-like protein 2</fullName>
        <ecNumber evidence="2">3.6.5.2</ecNumber>
    </recommendedName>
</protein>
<dbReference type="EC" id="3.6.5.2" evidence="2"/>
<dbReference type="EMBL" id="M55176">
    <property type="protein sequence ID" value="AAA83994.1"/>
    <property type="molecule type" value="Genomic_DNA"/>
</dbReference>
<dbReference type="PIR" id="B36365">
    <property type="entry name" value="B36365"/>
</dbReference>
<dbReference type="SMR" id="P22279"/>
<dbReference type="GO" id="GO:0005886">
    <property type="term" value="C:plasma membrane"/>
    <property type="evidence" value="ECO:0007669"/>
    <property type="project" value="UniProtKB-SubCell"/>
</dbReference>
<dbReference type="GO" id="GO:0003925">
    <property type="term" value="F:G protein activity"/>
    <property type="evidence" value="ECO:0007669"/>
    <property type="project" value="UniProtKB-EC"/>
</dbReference>
<dbReference type="GO" id="GO:0005525">
    <property type="term" value="F:GTP binding"/>
    <property type="evidence" value="ECO:0007669"/>
    <property type="project" value="UniProtKB-KW"/>
</dbReference>
<dbReference type="GO" id="GO:0007165">
    <property type="term" value="P:signal transduction"/>
    <property type="evidence" value="ECO:0007669"/>
    <property type="project" value="InterPro"/>
</dbReference>
<dbReference type="FunFam" id="3.40.50.300:FF:000080">
    <property type="entry name" value="Ras-like GTPase Ras1"/>
    <property type="match status" value="1"/>
</dbReference>
<dbReference type="Gene3D" id="3.40.50.300">
    <property type="entry name" value="P-loop containing nucleotide triphosphate hydrolases"/>
    <property type="match status" value="1"/>
</dbReference>
<dbReference type="InterPro" id="IPR027417">
    <property type="entry name" value="P-loop_NTPase"/>
</dbReference>
<dbReference type="InterPro" id="IPR005225">
    <property type="entry name" value="Small_GTP-bd"/>
</dbReference>
<dbReference type="InterPro" id="IPR001806">
    <property type="entry name" value="Small_GTPase"/>
</dbReference>
<dbReference type="InterPro" id="IPR020849">
    <property type="entry name" value="Small_GTPase_Ras-type"/>
</dbReference>
<dbReference type="NCBIfam" id="TIGR00231">
    <property type="entry name" value="small_GTP"/>
    <property type="match status" value="1"/>
</dbReference>
<dbReference type="PANTHER" id="PTHR24070">
    <property type="entry name" value="RAS, DI-RAS, AND RHEB FAMILY MEMBERS OF SMALL GTPASE SUPERFAMILY"/>
    <property type="match status" value="1"/>
</dbReference>
<dbReference type="Pfam" id="PF00071">
    <property type="entry name" value="Ras"/>
    <property type="match status" value="1"/>
</dbReference>
<dbReference type="PRINTS" id="PR00449">
    <property type="entry name" value="RASTRNSFRMNG"/>
</dbReference>
<dbReference type="SMART" id="SM00175">
    <property type="entry name" value="RAB"/>
    <property type="match status" value="1"/>
</dbReference>
<dbReference type="SMART" id="SM00176">
    <property type="entry name" value="RAN"/>
    <property type="match status" value="1"/>
</dbReference>
<dbReference type="SMART" id="SM00173">
    <property type="entry name" value="RAS"/>
    <property type="match status" value="1"/>
</dbReference>
<dbReference type="SMART" id="SM00174">
    <property type="entry name" value="RHO"/>
    <property type="match status" value="1"/>
</dbReference>
<dbReference type="SUPFAM" id="SSF52540">
    <property type="entry name" value="P-loop containing nucleoside triphosphate hydrolases"/>
    <property type="match status" value="1"/>
</dbReference>
<dbReference type="PROSITE" id="PS51421">
    <property type="entry name" value="RAS"/>
    <property type="match status" value="1"/>
</dbReference>
<evidence type="ECO:0000250" key="1"/>
<evidence type="ECO:0000250" key="2">
    <source>
        <dbReference type="UniProtKB" id="P01112"/>
    </source>
</evidence>
<evidence type="ECO:0000305" key="3"/>
<reference key="1">
    <citation type="journal article" date="1990" name="Mol. Cell. Biol.">
        <title>Expression of a gene family in the dimorphic fungus Mucor racemosus which exhibits striking similarity to human ras genes.</title>
        <authorList>
            <person name="Casale W.L."/>
            <person name="McConnell D.G."/>
            <person name="Wang S.-Y."/>
            <person name="Lee Y.-J."/>
            <person name="Linz J.E."/>
        </authorList>
    </citation>
    <scope>NUCLEOTIDE SEQUENCE [GENOMIC DNA]</scope>
    <source>
        <strain>ATCC 1216b / BCRC 32522 / CBS 277.49 / NRRL 3631</strain>
    </source>
</reference>